<comment type="function">
    <text>Role in flagellar biosynthesis.</text>
</comment>
<comment type="subcellular location">
    <subcellularLocation>
        <location evidence="2">Cell inner membrane</location>
        <topology evidence="2">Multi-pass membrane protein</topology>
    </subcellularLocation>
    <subcellularLocation>
        <location evidence="2">Bacterial flagellum basal body</location>
    </subcellularLocation>
</comment>
<comment type="similarity">
    <text evidence="3">Belongs to the FliR/MopE/SpaR family.</text>
</comment>
<sequence length="261" mass="28543">MLQVTSEQWLSWLNLYFWPLLRVLALISTAPILSERSVPKRVKLGLAMMITFAIAPSLPANDVPVFSFFALWLAVQQILIGIALGFTMQFAFAAVRTAGEIIGLQMGLSFATFVDPASHLNMPVLARIMDMLALLLFLTFNGHLWLISLLVDTFHTLPIGGEPLNSNAFLALTKAGSLIFLNGLMLALPLITLLLTLNLALGLLNRMAPQLSIFVIGFPLTLTVGISLMAALMPLIAPFCEHLFSEIFNLLADIISELPLI</sequence>
<accession>P33135</accession>
<accession>P76327</accession>
<organism>
    <name type="scientific">Escherichia coli (strain K12)</name>
    <dbReference type="NCBI Taxonomy" id="83333"/>
    <lineage>
        <taxon>Bacteria</taxon>
        <taxon>Pseudomonadati</taxon>
        <taxon>Pseudomonadota</taxon>
        <taxon>Gammaproteobacteria</taxon>
        <taxon>Enterobacterales</taxon>
        <taxon>Enterobacteriaceae</taxon>
        <taxon>Escherichia</taxon>
    </lineage>
</organism>
<keyword id="KW-0975">Bacterial flagellum</keyword>
<keyword id="KW-0997">Cell inner membrane</keyword>
<keyword id="KW-1003">Cell membrane</keyword>
<keyword id="KW-0472">Membrane</keyword>
<keyword id="KW-1185">Reference proteome</keyword>
<keyword id="KW-0812">Transmembrane</keyword>
<keyword id="KW-1133">Transmembrane helix</keyword>
<feature type="chain" id="PRO_0000192055" description="Flagellar biosynthetic protein FliR">
    <location>
        <begin position="1"/>
        <end position="261"/>
    </location>
</feature>
<feature type="transmembrane region" description="Helical" evidence="1">
    <location>
        <begin position="13"/>
        <end position="33"/>
    </location>
</feature>
<feature type="transmembrane region" description="Helical" evidence="1">
    <location>
        <begin position="45"/>
        <end position="65"/>
    </location>
</feature>
<feature type="transmembrane region" description="Helical" evidence="1">
    <location>
        <begin position="66"/>
        <end position="86"/>
    </location>
</feature>
<feature type="transmembrane region" description="Helical" evidence="1">
    <location>
        <begin position="90"/>
        <end position="110"/>
    </location>
</feature>
<feature type="transmembrane region" description="Helical" evidence="1">
    <location>
        <begin position="131"/>
        <end position="151"/>
    </location>
</feature>
<feature type="transmembrane region" description="Helical" evidence="1">
    <location>
        <begin position="184"/>
        <end position="204"/>
    </location>
</feature>
<feature type="transmembrane region" description="Helical" evidence="1">
    <location>
        <begin position="213"/>
        <end position="233"/>
    </location>
</feature>
<feature type="transmembrane region" description="Helical" evidence="1">
    <location>
        <begin position="235"/>
        <end position="255"/>
    </location>
</feature>
<feature type="sequence conflict" description="In Ref. 1; AAC36861." evidence="3" ref="1">
    <original>T</original>
    <variation>A</variation>
    <location>
        <position position="223"/>
    </location>
</feature>
<reference key="1">
    <citation type="journal article" date="1994" name="J. Bacteriol.">
        <title>Molecular characterization, nucleotide sequence, and expression of the fliO, fliP, fliQ, and fliR genes of Escherichia coli.</title>
        <authorList>
            <person name="Malakooti J."/>
            <person name="Ely B."/>
            <person name="Matsumura P."/>
        </authorList>
    </citation>
    <scope>NUCLEOTIDE SEQUENCE [GENOMIC DNA]</scope>
    <source>
        <strain>K12</strain>
    </source>
</reference>
<reference key="2">
    <citation type="journal article" date="1996" name="DNA Res.">
        <title>A 460-kb DNA sequence of the Escherichia coli K-12 genome corresponding to the 40.1-50.0 min region on the linkage map.</title>
        <authorList>
            <person name="Itoh T."/>
            <person name="Aiba H."/>
            <person name="Baba T."/>
            <person name="Fujita K."/>
            <person name="Hayashi K."/>
            <person name="Inada T."/>
            <person name="Isono K."/>
            <person name="Kasai H."/>
            <person name="Kimura S."/>
            <person name="Kitakawa M."/>
            <person name="Kitagawa M."/>
            <person name="Makino K."/>
            <person name="Miki T."/>
            <person name="Mizobuchi K."/>
            <person name="Mori H."/>
            <person name="Mori T."/>
            <person name="Motomura K."/>
            <person name="Nakade S."/>
            <person name="Nakamura Y."/>
            <person name="Nashimoto H."/>
            <person name="Nishio Y."/>
            <person name="Oshima T."/>
            <person name="Saito N."/>
            <person name="Sampei G."/>
            <person name="Seki Y."/>
            <person name="Sivasundaram S."/>
            <person name="Tagami H."/>
            <person name="Takeda J."/>
            <person name="Takemoto K."/>
            <person name="Wada C."/>
            <person name="Yamamoto Y."/>
            <person name="Horiuchi T."/>
        </authorList>
    </citation>
    <scope>NUCLEOTIDE SEQUENCE [LARGE SCALE GENOMIC DNA]</scope>
    <source>
        <strain>K12 / W3110 / ATCC 27325 / DSM 5911</strain>
    </source>
</reference>
<reference key="3">
    <citation type="journal article" date="1997" name="Science">
        <title>The complete genome sequence of Escherichia coli K-12.</title>
        <authorList>
            <person name="Blattner F.R."/>
            <person name="Plunkett G. III"/>
            <person name="Bloch C.A."/>
            <person name="Perna N.T."/>
            <person name="Burland V."/>
            <person name="Riley M."/>
            <person name="Collado-Vides J."/>
            <person name="Glasner J.D."/>
            <person name="Rode C.K."/>
            <person name="Mayhew G.F."/>
            <person name="Gregor J."/>
            <person name="Davis N.W."/>
            <person name="Kirkpatrick H.A."/>
            <person name="Goeden M.A."/>
            <person name="Rose D.J."/>
            <person name="Mau B."/>
            <person name="Shao Y."/>
        </authorList>
    </citation>
    <scope>NUCLEOTIDE SEQUENCE [LARGE SCALE GENOMIC DNA]</scope>
    <source>
        <strain>K12 / MG1655 / ATCC 47076</strain>
    </source>
</reference>
<reference key="4">
    <citation type="journal article" date="2006" name="Mol. Syst. Biol.">
        <title>Highly accurate genome sequences of Escherichia coli K-12 strains MG1655 and W3110.</title>
        <authorList>
            <person name="Hayashi K."/>
            <person name="Morooka N."/>
            <person name="Yamamoto Y."/>
            <person name="Fujita K."/>
            <person name="Isono K."/>
            <person name="Choi S."/>
            <person name="Ohtsubo E."/>
            <person name="Baba T."/>
            <person name="Wanner B.L."/>
            <person name="Mori H."/>
            <person name="Horiuchi T."/>
        </authorList>
    </citation>
    <scope>NUCLEOTIDE SEQUENCE [LARGE SCALE GENOMIC DNA]</scope>
    <source>
        <strain>K12 / W3110 / ATCC 27325 / DSM 5911</strain>
    </source>
</reference>
<reference key="5">
    <citation type="journal article" date="2005" name="Science">
        <title>Global topology analysis of the Escherichia coli inner membrane proteome.</title>
        <authorList>
            <person name="Daley D.O."/>
            <person name="Rapp M."/>
            <person name="Granseth E."/>
            <person name="Melen K."/>
            <person name="Drew D."/>
            <person name="von Heijne G."/>
        </authorList>
    </citation>
    <scope>SUBCELLULAR LOCATION</scope>
    <source>
        <strain>K12 / MG1655 / ATCC 47076</strain>
    </source>
</reference>
<protein>
    <recommendedName>
        <fullName>Flagellar biosynthetic protein FliR</fullName>
    </recommendedName>
</protein>
<dbReference type="EMBL" id="L22182">
    <property type="protein sequence ID" value="AAC36861.1"/>
    <property type="molecule type" value="Genomic_DNA"/>
</dbReference>
<dbReference type="EMBL" id="U00096">
    <property type="protein sequence ID" value="AAC75017.1"/>
    <property type="molecule type" value="Genomic_DNA"/>
</dbReference>
<dbReference type="EMBL" id="AP009048">
    <property type="protein sequence ID" value="BAA15775.1"/>
    <property type="molecule type" value="Genomic_DNA"/>
</dbReference>
<dbReference type="PIR" id="C64959">
    <property type="entry name" value="C64959"/>
</dbReference>
<dbReference type="RefSeq" id="NP_416460.1">
    <property type="nucleotide sequence ID" value="NC_000913.3"/>
</dbReference>
<dbReference type="RefSeq" id="WP_000942319.1">
    <property type="nucleotide sequence ID" value="NZ_LN832404.1"/>
</dbReference>
<dbReference type="SMR" id="P33135"/>
<dbReference type="BioGRID" id="4261046">
    <property type="interactions" value="276"/>
</dbReference>
<dbReference type="ComplexPortal" id="CPX-5885">
    <property type="entry name" value="Flagellar export complex"/>
</dbReference>
<dbReference type="FunCoup" id="P33135">
    <property type="interactions" value="75"/>
</dbReference>
<dbReference type="IntAct" id="P33135">
    <property type="interactions" value="4"/>
</dbReference>
<dbReference type="STRING" id="511145.b1950"/>
<dbReference type="PaxDb" id="511145-b1950"/>
<dbReference type="EnsemblBacteria" id="AAC75017">
    <property type="protein sequence ID" value="AAC75017"/>
    <property type="gene ID" value="b1950"/>
</dbReference>
<dbReference type="GeneID" id="946464"/>
<dbReference type="KEGG" id="ecj:JW1934"/>
<dbReference type="KEGG" id="eco:b1950"/>
<dbReference type="KEGG" id="ecoc:C3026_11040"/>
<dbReference type="PATRIC" id="fig|1411691.4.peg.301"/>
<dbReference type="EchoBASE" id="EB1920"/>
<dbReference type="eggNOG" id="COG1684">
    <property type="taxonomic scope" value="Bacteria"/>
</dbReference>
<dbReference type="HOGENOM" id="CLU_063626_4_0_6"/>
<dbReference type="InParanoid" id="P33135"/>
<dbReference type="OMA" id="APQFNIF"/>
<dbReference type="OrthoDB" id="9797790at2"/>
<dbReference type="PhylomeDB" id="P33135"/>
<dbReference type="BioCyc" id="EcoCyc:EG11977-MONOMER"/>
<dbReference type="PRO" id="PR:P33135"/>
<dbReference type="Proteomes" id="UP000000625">
    <property type="component" value="Chromosome"/>
</dbReference>
<dbReference type="GO" id="GO:0009288">
    <property type="term" value="C:bacterial-type flagellum"/>
    <property type="evidence" value="ECO:0000303"/>
    <property type="project" value="ComplexPortal"/>
</dbReference>
<dbReference type="GO" id="GO:0120102">
    <property type="term" value="C:bacterial-type flagellum secretion apparatus"/>
    <property type="evidence" value="ECO:0000303"/>
    <property type="project" value="ComplexPortal"/>
</dbReference>
<dbReference type="GO" id="GO:0005886">
    <property type="term" value="C:plasma membrane"/>
    <property type="evidence" value="ECO:0000314"/>
    <property type="project" value="EcoCyc"/>
</dbReference>
<dbReference type="GO" id="GO:0030257">
    <property type="term" value="C:type III protein secretion system complex"/>
    <property type="evidence" value="ECO:0000303"/>
    <property type="project" value="ComplexPortal"/>
</dbReference>
<dbReference type="GO" id="GO:0044780">
    <property type="term" value="P:bacterial-type flagellum assembly"/>
    <property type="evidence" value="ECO:0007669"/>
    <property type="project" value="InterPro"/>
</dbReference>
<dbReference type="GO" id="GO:0071973">
    <property type="term" value="P:bacterial-type flagellum-dependent cell motility"/>
    <property type="evidence" value="ECO:0000303"/>
    <property type="project" value="ComplexPortal"/>
</dbReference>
<dbReference type="GO" id="GO:0006935">
    <property type="term" value="P:chemotaxis"/>
    <property type="evidence" value="ECO:0000303"/>
    <property type="project" value="ComplexPortal"/>
</dbReference>
<dbReference type="GO" id="GO:0030254">
    <property type="term" value="P:protein secretion by the type III secretion system"/>
    <property type="evidence" value="ECO:0000303"/>
    <property type="project" value="ComplexPortal"/>
</dbReference>
<dbReference type="GO" id="GO:0006605">
    <property type="term" value="P:protein targeting"/>
    <property type="evidence" value="ECO:0007669"/>
    <property type="project" value="InterPro"/>
</dbReference>
<dbReference type="InterPro" id="IPR006303">
    <property type="entry name" value="FliR"/>
</dbReference>
<dbReference type="InterPro" id="IPR002010">
    <property type="entry name" value="T3SS_IM_R"/>
</dbReference>
<dbReference type="NCBIfam" id="TIGR01400">
    <property type="entry name" value="fliR"/>
    <property type="match status" value="1"/>
</dbReference>
<dbReference type="PANTHER" id="PTHR30065">
    <property type="entry name" value="FLAGELLAR BIOSYNTHETIC PROTEIN FLIR"/>
    <property type="match status" value="1"/>
</dbReference>
<dbReference type="PANTHER" id="PTHR30065:SF8">
    <property type="entry name" value="FLAGELLAR BIOSYNTHETIC PROTEIN FLIR"/>
    <property type="match status" value="1"/>
</dbReference>
<dbReference type="Pfam" id="PF01311">
    <property type="entry name" value="Bac_export_1"/>
    <property type="match status" value="1"/>
</dbReference>
<dbReference type="PRINTS" id="PR00953">
    <property type="entry name" value="TYPE3IMRPROT"/>
</dbReference>
<gene>
    <name type="primary">fliR</name>
    <name type="synonym">flaP</name>
    <name type="ordered locus">b1950</name>
    <name type="ordered locus">JW1934</name>
</gene>
<evidence type="ECO:0000255" key="1"/>
<evidence type="ECO:0000269" key="2">
    <source>
    </source>
</evidence>
<evidence type="ECO:0000305" key="3"/>
<name>FLIR_ECOLI</name>
<proteinExistence type="inferred from homology"/>